<feature type="chain" id="PRO_1000198508" description="Ribosomal RNA small subunit methyltransferase J">
    <location>
        <begin position="1"/>
        <end position="252"/>
    </location>
</feature>
<feature type="binding site" evidence="1">
    <location>
        <begin position="101"/>
        <end position="102"/>
    </location>
    <ligand>
        <name>S-adenosyl-L-methionine</name>
        <dbReference type="ChEBI" id="CHEBI:59789"/>
    </ligand>
</feature>
<feature type="binding site" evidence="1">
    <location>
        <begin position="117"/>
        <end position="118"/>
    </location>
    <ligand>
        <name>S-adenosyl-L-methionine</name>
        <dbReference type="ChEBI" id="CHEBI:59789"/>
    </ligand>
</feature>
<feature type="binding site" evidence="1">
    <location>
        <begin position="153"/>
        <end position="154"/>
    </location>
    <ligand>
        <name>S-adenosyl-L-methionine</name>
        <dbReference type="ChEBI" id="CHEBI:59789"/>
    </ligand>
</feature>
<feature type="binding site" evidence="1">
    <location>
        <position position="171"/>
    </location>
    <ligand>
        <name>S-adenosyl-L-methionine</name>
        <dbReference type="ChEBI" id="CHEBI:59789"/>
    </ligand>
</feature>
<dbReference type="EC" id="2.1.1.242" evidence="1"/>
<dbReference type="EMBL" id="AM933172">
    <property type="protein sequence ID" value="CAR34992.1"/>
    <property type="molecule type" value="Genomic_DNA"/>
</dbReference>
<dbReference type="RefSeq" id="WP_001165127.1">
    <property type="nucleotide sequence ID" value="NC_011294.1"/>
</dbReference>
<dbReference type="SMR" id="B5R3Z4"/>
<dbReference type="KEGG" id="set:SEN3416"/>
<dbReference type="HOGENOM" id="CLU_076324_0_0_6"/>
<dbReference type="Proteomes" id="UP000000613">
    <property type="component" value="Chromosome"/>
</dbReference>
<dbReference type="GO" id="GO:0005737">
    <property type="term" value="C:cytoplasm"/>
    <property type="evidence" value="ECO:0007669"/>
    <property type="project" value="UniProtKB-SubCell"/>
</dbReference>
<dbReference type="GO" id="GO:0008990">
    <property type="term" value="F:rRNA (guanine-N2-)-methyltransferase activity"/>
    <property type="evidence" value="ECO:0007669"/>
    <property type="project" value="UniProtKB-UniRule"/>
</dbReference>
<dbReference type="CDD" id="cd02440">
    <property type="entry name" value="AdoMet_MTases"/>
    <property type="match status" value="1"/>
</dbReference>
<dbReference type="FunFam" id="3.40.1630.10:FF:000001">
    <property type="entry name" value="Ribosomal RNA small subunit methyltransferase J"/>
    <property type="match status" value="1"/>
</dbReference>
<dbReference type="FunFam" id="3.40.50.150:FF:000072">
    <property type="entry name" value="Ribosomal RNA small subunit methyltransferase J"/>
    <property type="match status" value="1"/>
</dbReference>
<dbReference type="Gene3D" id="3.40.50.150">
    <property type="entry name" value="Vaccinia Virus protein VP39"/>
    <property type="match status" value="1"/>
</dbReference>
<dbReference type="Gene3D" id="3.40.1630.10">
    <property type="entry name" value="YhiQ-like domain"/>
    <property type="match status" value="1"/>
</dbReference>
<dbReference type="HAMAP" id="MF_01523">
    <property type="entry name" value="16SrRNA_methyltr_J"/>
    <property type="match status" value="1"/>
</dbReference>
<dbReference type="InterPro" id="IPR007536">
    <property type="entry name" value="16SrRNA_methylTrfase_J"/>
</dbReference>
<dbReference type="InterPro" id="IPR029063">
    <property type="entry name" value="SAM-dependent_MTases_sf"/>
</dbReference>
<dbReference type="NCBIfam" id="NF008012">
    <property type="entry name" value="PRK10742.1"/>
    <property type="match status" value="1"/>
</dbReference>
<dbReference type="PANTHER" id="PTHR36112">
    <property type="entry name" value="RIBOSOMAL RNA SMALL SUBUNIT METHYLTRANSFERASE J"/>
    <property type="match status" value="1"/>
</dbReference>
<dbReference type="PANTHER" id="PTHR36112:SF1">
    <property type="entry name" value="RIBOSOMAL RNA SMALL SUBUNIT METHYLTRANSFERASE J"/>
    <property type="match status" value="1"/>
</dbReference>
<dbReference type="Pfam" id="PF04445">
    <property type="entry name" value="SAM_MT"/>
    <property type="match status" value="1"/>
</dbReference>
<dbReference type="SUPFAM" id="SSF53335">
    <property type="entry name" value="S-adenosyl-L-methionine-dependent methyltransferases"/>
    <property type="match status" value="1"/>
</dbReference>
<reference key="1">
    <citation type="journal article" date="2008" name="Genome Res.">
        <title>Comparative genome analysis of Salmonella enteritidis PT4 and Salmonella gallinarum 287/91 provides insights into evolutionary and host adaptation pathways.</title>
        <authorList>
            <person name="Thomson N.R."/>
            <person name="Clayton D.J."/>
            <person name="Windhorst D."/>
            <person name="Vernikos G."/>
            <person name="Davidson S."/>
            <person name="Churcher C."/>
            <person name="Quail M.A."/>
            <person name="Stevens M."/>
            <person name="Jones M.A."/>
            <person name="Watson M."/>
            <person name="Barron A."/>
            <person name="Layton A."/>
            <person name="Pickard D."/>
            <person name="Kingsley R.A."/>
            <person name="Bignell A."/>
            <person name="Clark L."/>
            <person name="Harris B."/>
            <person name="Ormond D."/>
            <person name="Abdellah Z."/>
            <person name="Brooks K."/>
            <person name="Cherevach I."/>
            <person name="Chillingworth T."/>
            <person name="Woodward J."/>
            <person name="Norberczak H."/>
            <person name="Lord A."/>
            <person name="Arrowsmith C."/>
            <person name="Jagels K."/>
            <person name="Moule S."/>
            <person name="Mungall K."/>
            <person name="Saunders M."/>
            <person name="Whitehead S."/>
            <person name="Chabalgoity J.A."/>
            <person name="Maskell D."/>
            <person name="Humphreys T."/>
            <person name="Roberts M."/>
            <person name="Barrow P.A."/>
            <person name="Dougan G."/>
            <person name="Parkhill J."/>
        </authorList>
    </citation>
    <scope>NUCLEOTIDE SEQUENCE [LARGE SCALE GENOMIC DNA]</scope>
    <source>
        <strain>P125109</strain>
    </source>
</reference>
<gene>
    <name evidence="1" type="primary">rsmJ</name>
    <name type="synonym">yhiQ</name>
    <name type="ordered locus">SEN3416</name>
</gene>
<proteinExistence type="inferred from homology"/>
<organism>
    <name type="scientific">Salmonella enteritidis PT4 (strain P125109)</name>
    <dbReference type="NCBI Taxonomy" id="550537"/>
    <lineage>
        <taxon>Bacteria</taxon>
        <taxon>Pseudomonadati</taxon>
        <taxon>Pseudomonadota</taxon>
        <taxon>Gammaproteobacteria</taxon>
        <taxon>Enterobacterales</taxon>
        <taxon>Enterobacteriaceae</taxon>
        <taxon>Salmonella</taxon>
    </lineage>
</organism>
<evidence type="ECO:0000255" key="1">
    <source>
        <dbReference type="HAMAP-Rule" id="MF_01523"/>
    </source>
</evidence>
<accession>B5R3Z4</accession>
<comment type="function">
    <text evidence="1">Specifically methylates the guanosine in position 1516 of 16S rRNA.</text>
</comment>
<comment type="catalytic activity">
    <reaction evidence="1">
        <text>guanosine(1516) in 16S rRNA + S-adenosyl-L-methionine = N(2)-methylguanosine(1516) in 16S rRNA + S-adenosyl-L-homocysteine + H(+)</text>
        <dbReference type="Rhea" id="RHEA:43220"/>
        <dbReference type="Rhea" id="RHEA-COMP:10412"/>
        <dbReference type="Rhea" id="RHEA-COMP:10413"/>
        <dbReference type="ChEBI" id="CHEBI:15378"/>
        <dbReference type="ChEBI" id="CHEBI:57856"/>
        <dbReference type="ChEBI" id="CHEBI:59789"/>
        <dbReference type="ChEBI" id="CHEBI:74269"/>
        <dbReference type="ChEBI" id="CHEBI:74481"/>
        <dbReference type="EC" id="2.1.1.242"/>
    </reaction>
</comment>
<comment type="subcellular location">
    <subcellularLocation>
        <location evidence="1">Cytoplasm</location>
    </subcellularLocation>
</comment>
<comment type="similarity">
    <text evidence="1">Belongs to the methyltransferase superfamily. RsmJ family.</text>
</comment>
<sequence length="252" mass="27282">MQICLMDETGATDGALSVLAARWGLEHDEDNPMALVLTPQHLELRKRDEPKLGGIFVDFVGGAMAHRRKFGGGRGEAVAKAVGIKGDYLPDVVDATAGLGRDAFVLASVGCRVRMLERNPVVAALLDDGLTRGYADADIGGWLQERLQLIHASSLTALTDITPRPQVVYLDPMFPHRQKSALVKKEMRVFQSLVGPDLDADGLLEPARQLATKRVVVKRPDYAPPLADVATPNAIVTKGHRFDIYAGTPLTE</sequence>
<keyword id="KW-0963">Cytoplasm</keyword>
<keyword id="KW-0489">Methyltransferase</keyword>
<keyword id="KW-0698">rRNA processing</keyword>
<keyword id="KW-0949">S-adenosyl-L-methionine</keyword>
<keyword id="KW-0808">Transferase</keyword>
<protein>
    <recommendedName>
        <fullName evidence="1">Ribosomal RNA small subunit methyltransferase J</fullName>
        <ecNumber evidence="1">2.1.1.242</ecNumber>
    </recommendedName>
    <alternativeName>
        <fullName evidence="1">16S rRNA m2G1516 methyltransferase</fullName>
    </alternativeName>
    <alternativeName>
        <fullName evidence="1">rRNA (guanine-N(2)-)-methyltransferase</fullName>
    </alternativeName>
</protein>
<name>RSMJ_SALEP</name>